<feature type="chain" id="PRO_1000132824" description="Ribosomal protein L11 methyltransferase">
    <location>
        <begin position="1"/>
        <end position="293"/>
    </location>
</feature>
<feature type="binding site" evidence="1">
    <location>
        <position position="145"/>
    </location>
    <ligand>
        <name>S-adenosyl-L-methionine</name>
        <dbReference type="ChEBI" id="CHEBI:59789"/>
    </ligand>
</feature>
<feature type="binding site" evidence="1">
    <location>
        <position position="166"/>
    </location>
    <ligand>
        <name>S-adenosyl-L-methionine</name>
        <dbReference type="ChEBI" id="CHEBI:59789"/>
    </ligand>
</feature>
<feature type="binding site" evidence="1">
    <location>
        <position position="188"/>
    </location>
    <ligand>
        <name>S-adenosyl-L-methionine</name>
        <dbReference type="ChEBI" id="CHEBI:59789"/>
    </ligand>
</feature>
<feature type="binding site" evidence="1">
    <location>
        <position position="230"/>
    </location>
    <ligand>
        <name>S-adenosyl-L-methionine</name>
        <dbReference type="ChEBI" id="CHEBI:59789"/>
    </ligand>
</feature>
<gene>
    <name evidence="1" type="primary">prmA</name>
    <name type="ordered locus">SSPA3036</name>
</gene>
<sequence length="293" mass="31970">MPWIQLKLNTTGANAEELSDALMEAGAVSITFQDTHDTPVFEPLPGETRLWGDTDVIGLFDAETDMKDVVAILEQHPLLGAGFAHKIEQLEDKDWEREWMDNFHPMRFGERLWICPSWRDIPDENAVNVMLDPGLAFGTGTHPTTSLCLQWLDGLDLNGKTVIDFGCGSGILAIAALKLGAAKAIGIDIDPQAIQASRDNAERNGVSDRLELYLPKDQPEAMKADVVVANILAGPLRELAPLISVLPVEGGLLGLSGILASQAESVCDAYAELFTLDPVVEKEEWCRITGRKK</sequence>
<proteinExistence type="inferred from homology"/>
<comment type="function">
    <text evidence="1">Methylates ribosomal protein L11.</text>
</comment>
<comment type="catalytic activity">
    <reaction evidence="1">
        <text>L-lysyl-[protein] + 3 S-adenosyl-L-methionine = N(6),N(6),N(6)-trimethyl-L-lysyl-[protein] + 3 S-adenosyl-L-homocysteine + 3 H(+)</text>
        <dbReference type="Rhea" id="RHEA:54192"/>
        <dbReference type="Rhea" id="RHEA-COMP:9752"/>
        <dbReference type="Rhea" id="RHEA-COMP:13826"/>
        <dbReference type="ChEBI" id="CHEBI:15378"/>
        <dbReference type="ChEBI" id="CHEBI:29969"/>
        <dbReference type="ChEBI" id="CHEBI:57856"/>
        <dbReference type="ChEBI" id="CHEBI:59789"/>
        <dbReference type="ChEBI" id="CHEBI:61961"/>
    </reaction>
</comment>
<comment type="subcellular location">
    <subcellularLocation>
        <location evidence="1">Cytoplasm</location>
    </subcellularLocation>
</comment>
<comment type="similarity">
    <text evidence="1">Belongs to the methyltransferase superfamily. PrmA family.</text>
</comment>
<reference key="1">
    <citation type="journal article" date="2009" name="BMC Genomics">
        <title>Pseudogene accumulation in the evolutionary histories of Salmonella enterica serovars Paratyphi A and Typhi.</title>
        <authorList>
            <person name="Holt K.E."/>
            <person name="Thomson N.R."/>
            <person name="Wain J."/>
            <person name="Langridge G.C."/>
            <person name="Hasan R."/>
            <person name="Bhutta Z.A."/>
            <person name="Quail M.A."/>
            <person name="Norbertczak H."/>
            <person name="Walker D."/>
            <person name="Simmonds M."/>
            <person name="White B."/>
            <person name="Bason N."/>
            <person name="Mungall K."/>
            <person name="Dougan G."/>
            <person name="Parkhill J."/>
        </authorList>
    </citation>
    <scope>NUCLEOTIDE SEQUENCE [LARGE SCALE GENOMIC DNA]</scope>
    <source>
        <strain>AKU_12601</strain>
    </source>
</reference>
<evidence type="ECO:0000255" key="1">
    <source>
        <dbReference type="HAMAP-Rule" id="MF_00735"/>
    </source>
</evidence>
<keyword id="KW-0963">Cytoplasm</keyword>
<keyword id="KW-0489">Methyltransferase</keyword>
<keyword id="KW-0949">S-adenosyl-L-methionine</keyword>
<keyword id="KW-0808">Transferase</keyword>
<name>PRMA_SALPK</name>
<protein>
    <recommendedName>
        <fullName evidence="1">Ribosomal protein L11 methyltransferase</fullName>
        <shortName evidence="1">L11 Mtase</shortName>
        <ecNumber evidence="1">2.1.1.-</ecNumber>
    </recommendedName>
</protein>
<organism>
    <name type="scientific">Salmonella paratyphi A (strain AKU_12601)</name>
    <dbReference type="NCBI Taxonomy" id="554290"/>
    <lineage>
        <taxon>Bacteria</taxon>
        <taxon>Pseudomonadati</taxon>
        <taxon>Pseudomonadota</taxon>
        <taxon>Gammaproteobacteria</taxon>
        <taxon>Enterobacterales</taxon>
        <taxon>Enterobacteriaceae</taxon>
        <taxon>Salmonella</taxon>
    </lineage>
</organism>
<dbReference type="EC" id="2.1.1.-" evidence="1"/>
<dbReference type="EMBL" id="FM200053">
    <property type="protein sequence ID" value="CAR61286.1"/>
    <property type="molecule type" value="Genomic_DNA"/>
</dbReference>
<dbReference type="RefSeq" id="WP_001145849.1">
    <property type="nucleotide sequence ID" value="NC_011147.1"/>
</dbReference>
<dbReference type="SMR" id="B5BGT7"/>
<dbReference type="KEGG" id="sek:SSPA3036"/>
<dbReference type="HOGENOM" id="CLU_049382_4_1_6"/>
<dbReference type="Proteomes" id="UP000001869">
    <property type="component" value="Chromosome"/>
</dbReference>
<dbReference type="GO" id="GO:0005829">
    <property type="term" value="C:cytosol"/>
    <property type="evidence" value="ECO:0007669"/>
    <property type="project" value="TreeGrafter"/>
</dbReference>
<dbReference type="GO" id="GO:0016279">
    <property type="term" value="F:protein-lysine N-methyltransferase activity"/>
    <property type="evidence" value="ECO:0007669"/>
    <property type="project" value="TreeGrafter"/>
</dbReference>
<dbReference type="GO" id="GO:0032259">
    <property type="term" value="P:methylation"/>
    <property type="evidence" value="ECO:0007669"/>
    <property type="project" value="UniProtKB-KW"/>
</dbReference>
<dbReference type="CDD" id="cd02440">
    <property type="entry name" value="AdoMet_MTases"/>
    <property type="match status" value="1"/>
</dbReference>
<dbReference type="FunFam" id="3.40.50.150:FF:000021">
    <property type="entry name" value="Ribosomal protein L11 methyltransferase"/>
    <property type="match status" value="1"/>
</dbReference>
<dbReference type="Gene3D" id="3.40.50.150">
    <property type="entry name" value="Vaccinia Virus protein VP39"/>
    <property type="match status" value="1"/>
</dbReference>
<dbReference type="HAMAP" id="MF_00735">
    <property type="entry name" value="Methyltr_PrmA"/>
    <property type="match status" value="1"/>
</dbReference>
<dbReference type="InterPro" id="IPR050078">
    <property type="entry name" value="Ribosomal_L11_MeTrfase_PrmA"/>
</dbReference>
<dbReference type="InterPro" id="IPR004498">
    <property type="entry name" value="Ribosomal_PrmA_MeTrfase"/>
</dbReference>
<dbReference type="InterPro" id="IPR029063">
    <property type="entry name" value="SAM-dependent_MTases_sf"/>
</dbReference>
<dbReference type="NCBIfam" id="TIGR00406">
    <property type="entry name" value="prmA"/>
    <property type="match status" value="1"/>
</dbReference>
<dbReference type="PANTHER" id="PTHR43648">
    <property type="entry name" value="ELECTRON TRANSFER FLAVOPROTEIN BETA SUBUNIT LYSINE METHYLTRANSFERASE"/>
    <property type="match status" value="1"/>
</dbReference>
<dbReference type="PANTHER" id="PTHR43648:SF1">
    <property type="entry name" value="ELECTRON TRANSFER FLAVOPROTEIN BETA SUBUNIT LYSINE METHYLTRANSFERASE"/>
    <property type="match status" value="1"/>
</dbReference>
<dbReference type="Pfam" id="PF06325">
    <property type="entry name" value="PrmA"/>
    <property type="match status" value="1"/>
</dbReference>
<dbReference type="PIRSF" id="PIRSF000401">
    <property type="entry name" value="RPL11_MTase"/>
    <property type="match status" value="1"/>
</dbReference>
<dbReference type="SUPFAM" id="SSF53335">
    <property type="entry name" value="S-adenosyl-L-methionine-dependent methyltransferases"/>
    <property type="match status" value="1"/>
</dbReference>
<accession>B5BGT7</accession>